<evidence type="ECO:0000255" key="1">
    <source>
        <dbReference type="HAMAP-Rule" id="MF_00268"/>
    </source>
</evidence>
<protein>
    <recommendedName>
        <fullName evidence="1">Protein RecA</fullName>
    </recommendedName>
    <alternativeName>
        <fullName evidence="1">Recombinase A</fullName>
    </alternativeName>
</protein>
<organism>
    <name type="scientific">Bartonella quintana (strain Toulouse)</name>
    <name type="common">Rochalimaea quintana</name>
    <dbReference type="NCBI Taxonomy" id="283165"/>
    <lineage>
        <taxon>Bacteria</taxon>
        <taxon>Pseudomonadati</taxon>
        <taxon>Pseudomonadota</taxon>
        <taxon>Alphaproteobacteria</taxon>
        <taxon>Hyphomicrobiales</taxon>
        <taxon>Bartonellaceae</taxon>
        <taxon>Bartonella</taxon>
    </lineage>
</organism>
<comment type="function">
    <text evidence="1">Can catalyze the hydrolysis of ATP in the presence of single-stranded DNA, the ATP-dependent uptake of single-stranded DNA by duplex DNA, and the ATP-dependent hybridization of homologous single-stranded DNAs. It interacts with LexA causing its activation and leading to its autocatalytic cleavage.</text>
</comment>
<comment type="subcellular location">
    <subcellularLocation>
        <location evidence="1">Cytoplasm</location>
    </subcellularLocation>
</comment>
<comment type="similarity">
    <text evidence="1">Belongs to the RecA family.</text>
</comment>
<proteinExistence type="inferred from homology"/>
<feature type="chain" id="PRO_0000122659" description="Protein RecA">
    <location>
        <begin position="1"/>
        <end position="347"/>
    </location>
</feature>
<feature type="binding site" evidence="1">
    <location>
        <begin position="64"/>
        <end position="71"/>
    </location>
    <ligand>
        <name>ATP</name>
        <dbReference type="ChEBI" id="CHEBI:30616"/>
    </ligand>
</feature>
<gene>
    <name evidence="1" type="primary">recA</name>
    <name type="ordered locus">BQ07950</name>
</gene>
<accession>Q6FZF0</accession>
<name>RECA_BARQU</name>
<reference key="1">
    <citation type="journal article" date="2004" name="Proc. Natl. Acad. Sci. U.S.A.">
        <title>The louse-borne human pathogen Bartonella quintana is a genomic derivative of the zoonotic agent Bartonella henselae.</title>
        <authorList>
            <person name="Alsmark U.C.M."/>
            <person name="Frank A.C."/>
            <person name="Karlberg E.O."/>
            <person name="Legault B.-A."/>
            <person name="Ardell D.H."/>
            <person name="Canbaeck B."/>
            <person name="Eriksson A.-S."/>
            <person name="Naeslund A.K."/>
            <person name="Handley S.A."/>
            <person name="Huvet M."/>
            <person name="La Scola B."/>
            <person name="Holmberg M."/>
            <person name="Andersson S.G.E."/>
        </authorList>
    </citation>
    <scope>NUCLEOTIDE SEQUENCE [LARGE SCALE GENOMIC DNA]</scope>
    <source>
        <strain>Toulouse</strain>
    </source>
</reference>
<keyword id="KW-0067">ATP-binding</keyword>
<keyword id="KW-0963">Cytoplasm</keyword>
<keyword id="KW-0227">DNA damage</keyword>
<keyword id="KW-0233">DNA recombination</keyword>
<keyword id="KW-0234">DNA repair</keyword>
<keyword id="KW-0238">DNA-binding</keyword>
<keyword id="KW-0547">Nucleotide-binding</keyword>
<keyword id="KW-0742">SOS response</keyword>
<dbReference type="EMBL" id="BX897700">
    <property type="protein sequence ID" value="CAF26278.1"/>
    <property type="molecule type" value="Genomic_DNA"/>
</dbReference>
<dbReference type="RefSeq" id="WP_011179525.1">
    <property type="nucleotide sequence ID" value="NC_005955.1"/>
</dbReference>
<dbReference type="SMR" id="Q6FZF0"/>
<dbReference type="KEGG" id="bqu:BQ07950"/>
<dbReference type="eggNOG" id="COG0468">
    <property type="taxonomic scope" value="Bacteria"/>
</dbReference>
<dbReference type="HOGENOM" id="CLU_040469_1_2_5"/>
<dbReference type="OrthoDB" id="9776733at2"/>
<dbReference type="Proteomes" id="UP000000597">
    <property type="component" value="Chromosome"/>
</dbReference>
<dbReference type="GO" id="GO:0005829">
    <property type="term" value="C:cytosol"/>
    <property type="evidence" value="ECO:0007669"/>
    <property type="project" value="TreeGrafter"/>
</dbReference>
<dbReference type="GO" id="GO:0005524">
    <property type="term" value="F:ATP binding"/>
    <property type="evidence" value="ECO:0007669"/>
    <property type="project" value="UniProtKB-UniRule"/>
</dbReference>
<dbReference type="GO" id="GO:0016887">
    <property type="term" value="F:ATP hydrolysis activity"/>
    <property type="evidence" value="ECO:0007669"/>
    <property type="project" value="InterPro"/>
</dbReference>
<dbReference type="GO" id="GO:0140664">
    <property type="term" value="F:ATP-dependent DNA damage sensor activity"/>
    <property type="evidence" value="ECO:0007669"/>
    <property type="project" value="InterPro"/>
</dbReference>
<dbReference type="GO" id="GO:0003684">
    <property type="term" value="F:damaged DNA binding"/>
    <property type="evidence" value="ECO:0007669"/>
    <property type="project" value="UniProtKB-UniRule"/>
</dbReference>
<dbReference type="GO" id="GO:0003697">
    <property type="term" value="F:single-stranded DNA binding"/>
    <property type="evidence" value="ECO:0007669"/>
    <property type="project" value="UniProtKB-UniRule"/>
</dbReference>
<dbReference type="GO" id="GO:0006310">
    <property type="term" value="P:DNA recombination"/>
    <property type="evidence" value="ECO:0007669"/>
    <property type="project" value="UniProtKB-UniRule"/>
</dbReference>
<dbReference type="GO" id="GO:0006281">
    <property type="term" value="P:DNA repair"/>
    <property type="evidence" value="ECO:0007669"/>
    <property type="project" value="UniProtKB-UniRule"/>
</dbReference>
<dbReference type="GO" id="GO:0009432">
    <property type="term" value="P:SOS response"/>
    <property type="evidence" value="ECO:0007669"/>
    <property type="project" value="UniProtKB-UniRule"/>
</dbReference>
<dbReference type="CDD" id="cd00983">
    <property type="entry name" value="RecA"/>
    <property type="match status" value="1"/>
</dbReference>
<dbReference type="FunFam" id="3.40.50.300:FF:000087">
    <property type="entry name" value="Recombinase RecA"/>
    <property type="match status" value="1"/>
</dbReference>
<dbReference type="Gene3D" id="3.40.50.300">
    <property type="entry name" value="P-loop containing nucleotide triphosphate hydrolases"/>
    <property type="match status" value="1"/>
</dbReference>
<dbReference type="HAMAP" id="MF_00268">
    <property type="entry name" value="RecA"/>
    <property type="match status" value="1"/>
</dbReference>
<dbReference type="InterPro" id="IPR003593">
    <property type="entry name" value="AAA+_ATPase"/>
</dbReference>
<dbReference type="InterPro" id="IPR013765">
    <property type="entry name" value="DNA_recomb/repair_RecA"/>
</dbReference>
<dbReference type="InterPro" id="IPR020584">
    <property type="entry name" value="DNA_recomb/repair_RecA_CS"/>
</dbReference>
<dbReference type="InterPro" id="IPR027417">
    <property type="entry name" value="P-loop_NTPase"/>
</dbReference>
<dbReference type="InterPro" id="IPR049261">
    <property type="entry name" value="RecA-like_C"/>
</dbReference>
<dbReference type="InterPro" id="IPR049428">
    <property type="entry name" value="RecA-like_N"/>
</dbReference>
<dbReference type="InterPro" id="IPR020588">
    <property type="entry name" value="RecA_ATP-bd"/>
</dbReference>
<dbReference type="InterPro" id="IPR023400">
    <property type="entry name" value="RecA_C_sf"/>
</dbReference>
<dbReference type="InterPro" id="IPR020587">
    <property type="entry name" value="RecA_monomer-monomer_interface"/>
</dbReference>
<dbReference type="NCBIfam" id="TIGR02012">
    <property type="entry name" value="tigrfam_recA"/>
    <property type="match status" value="1"/>
</dbReference>
<dbReference type="PANTHER" id="PTHR45900:SF1">
    <property type="entry name" value="MITOCHONDRIAL DNA REPAIR PROTEIN RECA HOMOLOG-RELATED"/>
    <property type="match status" value="1"/>
</dbReference>
<dbReference type="PANTHER" id="PTHR45900">
    <property type="entry name" value="RECA"/>
    <property type="match status" value="1"/>
</dbReference>
<dbReference type="Pfam" id="PF00154">
    <property type="entry name" value="RecA"/>
    <property type="match status" value="1"/>
</dbReference>
<dbReference type="Pfam" id="PF21096">
    <property type="entry name" value="RecA_C"/>
    <property type="match status" value="1"/>
</dbReference>
<dbReference type="PRINTS" id="PR00142">
    <property type="entry name" value="RECA"/>
</dbReference>
<dbReference type="SMART" id="SM00382">
    <property type="entry name" value="AAA"/>
    <property type="match status" value="1"/>
</dbReference>
<dbReference type="SUPFAM" id="SSF52540">
    <property type="entry name" value="P-loop containing nucleoside triphosphate hydrolases"/>
    <property type="match status" value="1"/>
</dbReference>
<dbReference type="SUPFAM" id="SSF54752">
    <property type="entry name" value="RecA protein, C-terminal domain"/>
    <property type="match status" value="1"/>
</dbReference>
<dbReference type="PROSITE" id="PS00321">
    <property type="entry name" value="RECA_1"/>
    <property type="match status" value="1"/>
</dbReference>
<dbReference type="PROSITE" id="PS50162">
    <property type="entry name" value="RECA_2"/>
    <property type="match status" value="1"/>
</dbReference>
<dbReference type="PROSITE" id="PS50163">
    <property type="entry name" value="RECA_3"/>
    <property type="match status" value="1"/>
</dbReference>
<sequence length="347" mass="37470">MDKTKALDAALSQIERSFGKGSIMRLGQKEQVVEIETIPTGSLSLDIALGVGGLPKGRIVEIYGPESSGKTTLALHAIAEAQKNGGVCAFIDAEHALDPIYARKLGVDLENLFISQPDTGEQALEITETLVRSGAVDVLVVDSVAALTPRAEIDGEMGDALPGLQARLMSKALRKLTASIFRSNCMVIFINQIRMKIGVMFGSPETTTGGNALKFYASVRLDIRRVGSIKDRDMIVGNQTRVKVVKNKLAPPFKQVEFDIIYGEGISKLGELIDLGVKVGIVEKSGSWFSYNSQRLGQGRENAKQFLREHAEIATEIETALRQNAGLIAIELLENAGSENTESNEAI</sequence>